<sequence>MSSQIDAVILAGGMARRMGGDDKGLVELNGEAMIKHTIDRIKPQVKEILINANRNQTRYAEFGFKVISDEHTGFLGPLAGMITAMGQTDADYLLVVPCDCPLLPTDLVPRMLAAIKAEDAEIAVASDGEYEQPVVLLLKPSLRDSMKAFLEAGERKVDFWYAKHHFVVESFSDQPNAFVNVNTPEQKQRLAMEITK</sequence>
<evidence type="ECO:0000255" key="1">
    <source>
        <dbReference type="HAMAP-Rule" id="MF_00316"/>
    </source>
</evidence>
<organism>
    <name type="scientific">Shewanella baltica (strain OS155 / ATCC BAA-1091)</name>
    <dbReference type="NCBI Taxonomy" id="325240"/>
    <lineage>
        <taxon>Bacteria</taxon>
        <taxon>Pseudomonadati</taxon>
        <taxon>Pseudomonadota</taxon>
        <taxon>Gammaproteobacteria</taxon>
        <taxon>Alteromonadales</taxon>
        <taxon>Shewanellaceae</taxon>
        <taxon>Shewanella</taxon>
    </lineage>
</organism>
<keyword id="KW-0963">Cytoplasm</keyword>
<keyword id="KW-0342">GTP-binding</keyword>
<keyword id="KW-0460">Magnesium</keyword>
<keyword id="KW-0479">Metal-binding</keyword>
<keyword id="KW-0501">Molybdenum cofactor biosynthesis</keyword>
<keyword id="KW-0547">Nucleotide-binding</keyword>
<keyword id="KW-1185">Reference proteome</keyword>
<keyword id="KW-0808">Transferase</keyword>
<comment type="function">
    <text evidence="1">Transfers a GMP moiety from GTP to Mo-molybdopterin (Mo-MPT) cofactor (Moco or molybdenum cofactor) to form Mo-molybdopterin guanine dinucleotide (Mo-MGD) cofactor.</text>
</comment>
<comment type="catalytic activity">
    <reaction evidence="1">
        <text>Mo-molybdopterin + GTP + H(+) = Mo-molybdopterin guanine dinucleotide + diphosphate</text>
        <dbReference type="Rhea" id="RHEA:34243"/>
        <dbReference type="ChEBI" id="CHEBI:15378"/>
        <dbReference type="ChEBI" id="CHEBI:33019"/>
        <dbReference type="ChEBI" id="CHEBI:37565"/>
        <dbReference type="ChEBI" id="CHEBI:71302"/>
        <dbReference type="ChEBI" id="CHEBI:71310"/>
        <dbReference type="EC" id="2.7.7.77"/>
    </reaction>
</comment>
<comment type="cofactor">
    <cofactor evidence="1">
        <name>Mg(2+)</name>
        <dbReference type="ChEBI" id="CHEBI:18420"/>
    </cofactor>
</comment>
<comment type="subunit">
    <text evidence="1">Monomer.</text>
</comment>
<comment type="subcellular location">
    <subcellularLocation>
        <location evidence="1">Cytoplasm</location>
    </subcellularLocation>
</comment>
<comment type="domain">
    <text evidence="1">The N-terminal domain determines nucleotide recognition and specific binding, while the C-terminal domain determines the specific binding to the target protein.</text>
</comment>
<comment type="similarity">
    <text evidence="1">Belongs to the MobA family.</text>
</comment>
<proteinExistence type="inferred from homology"/>
<accession>A3CYQ1</accession>
<name>MOBA_SHEB5</name>
<reference key="1">
    <citation type="submission" date="2007-02" db="EMBL/GenBank/DDBJ databases">
        <title>Complete sequence of chromosome of Shewanella baltica OS155.</title>
        <authorList>
            <consortium name="US DOE Joint Genome Institute"/>
            <person name="Copeland A."/>
            <person name="Lucas S."/>
            <person name="Lapidus A."/>
            <person name="Barry K."/>
            <person name="Detter J.C."/>
            <person name="Glavina del Rio T."/>
            <person name="Hammon N."/>
            <person name="Israni S."/>
            <person name="Dalin E."/>
            <person name="Tice H."/>
            <person name="Pitluck S."/>
            <person name="Sims D.R."/>
            <person name="Brettin T."/>
            <person name="Bruce D."/>
            <person name="Han C."/>
            <person name="Tapia R."/>
            <person name="Brainard J."/>
            <person name="Schmutz J."/>
            <person name="Larimer F."/>
            <person name="Land M."/>
            <person name="Hauser L."/>
            <person name="Kyrpides N."/>
            <person name="Mikhailova N."/>
            <person name="Brettar I."/>
            <person name="Klappenbach J."/>
            <person name="Konstantinidis K."/>
            <person name="Rodrigues J."/>
            <person name="Tiedje J."/>
            <person name="Richardson P."/>
        </authorList>
    </citation>
    <scope>NUCLEOTIDE SEQUENCE [LARGE SCALE GENOMIC DNA]</scope>
    <source>
        <strain>OS155 / ATCC BAA-1091</strain>
    </source>
</reference>
<gene>
    <name evidence="1" type="primary">mobA</name>
    <name type="ordered locus">Sbal_0079</name>
</gene>
<feature type="chain" id="PRO_1000019146" description="Molybdenum cofactor guanylyltransferase">
    <location>
        <begin position="1"/>
        <end position="196"/>
    </location>
</feature>
<feature type="binding site" evidence="1">
    <location>
        <begin position="10"/>
        <end position="12"/>
    </location>
    <ligand>
        <name>GTP</name>
        <dbReference type="ChEBI" id="CHEBI:37565"/>
    </ligand>
</feature>
<feature type="binding site" evidence="1">
    <location>
        <position position="23"/>
    </location>
    <ligand>
        <name>GTP</name>
        <dbReference type="ChEBI" id="CHEBI:37565"/>
    </ligand>
</feature>
<feature type="binding site" evidence="1">
    <location>
        <position position="51"/>
    </location>
    <ligand>
        <name>GTP</name>
        <dbReference type="ChEBI" id="CHEBI:37565"/>
    </ligand>
</feature>
<feature type="binding site" evidence="1">
    <location>
        <position position="69"/>
    </location>
    <ligand>
        <name>GTP</name>
        <dbReference type="ChEBI" id="CHEBI:37565"/>
    </ligand>
</feature>
<feature type="binding site" evidence="1">
    <location>
        <position position="99"/>
    </location>
    <ligand>
        <name>GTP</name>
        <dbReference type="ChEBI" id="CHEBI:37565"/>
    </ligand>
</feature>
<feature type="binding site" evidence="1">
    <location>
        <position position="99"/>
    </location>
    <ligand>
        <name>Mg(2+)</name>
        <dbReference type="ChEBI" id="CHEBI:18420"/>
    </ligand>
</feature>
<protein>
    <recommendedName>
        <fullName evidence="1">Molybdenum cofactor guanylyltransferase</fullName>
        <shortName evidence="1">MoCo guanylyltransferase</shortName>
        <ecNumber evidence="1">2.7.7.77</ecNumber>
    </recommendedName>
    <alternativeName>
        <fullName evidence="1">GTP:molybdopterin guanylyltransferase</fullName>
    </alternativeName>
    <alternativeName>
        <fullName evidence="1">Mo-MPT guanylyltransferase</fullName>
    </alternativeName>
    <alternativeName>
        <fullName evidence="1">Molybdopterin guanylyltransferase</fullName>
    </alternativeName>
    <alternativeName>
        <fullName evidence="1">Molybdopterin-guanine dinucleotide synthase</fullName>
        <shortName evidence="1">MGD synthase</shortName>
    </alternativeName>
</protein>
<dbReference type="EC" id="2.7.7.77" evidence="1"/>
<dbReference type="EMBL" id="CP000563">
    <property type="protein sequence ID" value="ABN59614.1"/>
    <property type="molecule type" value="Genomic_DNA"/>
</dbReference>
<dbReference type="RefSeq" id="WP_006084724.1">
    <property type="nucleotide sequence ID" value="NC_009052.1"/>
</dbReference>
<dbReference type="SMR" id="A3CYQ1"/>
<dbReference type="STRING" id="325240.Sbal_0079"/>
<dbReference type="GeneID" id="11774415"/>
<dbReference type="KEGG" id="sbl:Sbal_0079"/>
<dbReference type="HOGENOM" id="CLU_055597_5_1_6"/>
<dbReference type="OrthoDB" id="9788394at2"/>
<dbReference type="Proteomes" id="UP000001557">
    <property type="component" value="Chromosome"/>
</dbReference>
<dbReference type="GO" id="GO:0005737">
    <property type="term" value="C:cytoplasm"/>
    <property type="evidence" value="ECO:0007669"/>
    <property type="project" value="UniProtKB-SubCell"/>
</dbReference>
<dbReference type="GO" id="GO:0005525">
    <property type="term" value="F:GTP binding"/>
    <property type="evidence" value="ECO:0007669"/>
    <property type="project" value="UniProtKB-UniRule"/>
</dbReference>
<dbReference type="GO" id="GO:0046872">
    <property type="term" value="F:metal ion binding"/>
    <property type="evidence" value="ECO:0007669"/>
    <property type="project" value="UniProtKB-KW"/>
</dbReference>
<dbReference type="GO" id="GO:0061603">
    <property type="term" value="F:molybdenum cofactor guanylyltransferase activity"/>
    <property type="evidence" value="ECO:0007669"/>
    <property type="project" value="UniProtKB-EC"/>
</dbReference>
<dbReference type="GO" id="GO:1902758">
    <property type="term" value="P:bis(molybdopterin guanine dinucleotide)molybdenum biosynthetic process"/>
    <property type="evidence" value="ECO:0007669"/>
    <property type="project" value="TreeGrafter"/>
</dbReference>
<dbReference type="CDD" id="cd02503">
    <property type="entry name" value="MobA"/>
    <property type="match status" value="1"/>
</dbReference>
<dbReference type="Gene3D" id="3.90.550.10">
    <property type="entry name" value="Spore Coat Polysaccharide Biosynthesis Protein SpsA, Chain A"/>
    <property type="match status" value="1"/>
</dbReference>
<dbReference type="HAMAP" id="MF_00316">
    <property type="entry name" value="MobA"/>
    <property type="match status" value="1"/>
</dbReference>
<dbReference type="InterPro" id="IPR025877">
    <property type="entry name" value="MobA-like_NTP_Trfase"/>
</dbReference>
<dbReference type="InterPro" id="IPR013482">
    <property type="entry name" value="Molybde_CF_guanTrfase"/>
</dbReference>
<dbReference type="InterPro" id="IPR029044">
    <property type="entry name" value="Nucleotide-diphossugar_trans"/>
</dbReference>
<dbReference type="NCBIfam" id="TIGR02665">
    <property type="entry name" value="molyb_mobA"/>
    <property type="match status" value="1"/>
</dbReference>
<dbReference type="PANTHER" id="PTHR19136">
    <property type="entry name" value="MOLYBDENUM COFACTOR GUANYLYLTRANSFERASE"/>
    <property type="match status" value="1"/>
</dbReference>
<dbReference type="PANTHER" id="PTHR19136:SF81">
    <property type="entry name" value="MOLYBDENUM COFACTOR GUANYLYLTRANSFERASE"/>
    <property type="match status" value="1"/>
</dbReference>
<dbReference type="Pfam" id="PF12804">
    <property type="entry name" value="NTP_transf_3"/>
    <property type="match status" value="1"/>
</dbReference>
<dbReference type="SUPFAM" id="SSF53448">
    <property type="entry name" value="Nucleotide-diphospho-sugar transferases"/>
    <property type="match status" value="1"/>
</dbReference>